<feature type="chain" id="PRO_1000080577" description="Na(+)-translocating NADH-quinone reductase subunit F">
    <location>
        <begin position="1"/>
        <end position="411"/>
    </location>
</feature>
<feature type="transmembrane region" description="Helical" evidence="1">
    <location>
        <begin position="5"/>
        <end position="25"/>
    </location>
</feature>
<feature type="domain" description="2Fe-2S ferredoxin-type" evidence="1">
    <location>
        <begin position="36"/>
        <end position="130"/>
    </location>
</feature>
<feature type="domain" description="FAD-binding FR-type" evidence="1">
    <location>
        <begin position="133"/>
        <end position="273"/>
    </location>
</feature>
<feature type="binding site" evidence="1">
    <location>
        <position position="73"/>
    </location>
    <ligand>
        <name>[2Fe-2S] cluster</name>
        <dbReference type="ChEBI" id="CHEBI:190135"/>
    </ligand>
</feature>
<feature type="binding site" evidence="1">
    <location>
        <position position="79"/>
    </location>
    <ligand>
        <name>[2Fe-2S] cluster</name>
        <dbReference type="ChEBI" id="CHEBI:190135"/>
    </ligand>
</feature>
<feature type="binding site" evidence="1">
    <location>
        <position position="82"/>
    </location>
    <ligand>
        <name>[2Fe-2S] cluster</name>
        <dbReference type="ChEBI" id="CHEBI:190135"/>
    </ligand>
</feature>
<feature type="binding site" evidence="1">
    <location>
        <position position="114"/>
    </location>
    <ligand>
        <name>[2Fe-2S] cluster</name>
        <dbReference type="ChEBI" id="CHEBI:190135"/>
    </ligand>
</feature>
<accession>A5UAX6</accession>
<organism>
    <name type="scientific">Haemophilus influenzae (strain PittEE)</name>
    <dbReference type="NCBI Taxonomy" id="374930"/>
    <lineage>
        <taxon>Bacteria</taxon>
        <taxon>Pseudomonadati</taxon>
        <taxon>Pseudomonadota</taxon>
        <taxon>Gammaproteobacteria</taxon>
        <taxon>Pasteurellales</taxon>
        <taxon>Pasteurellaceae</taxon>
        <taxon>Haemophilus</taxon>
    </lineage>
</organism>
<evidence type="ECO:0000255" key="1">
    <source>
        <dbReference type="HAMAP-Rule" id="MF_00430"/>
    </source>
</evidence>
<name>NQRF_HAEIE</name>
<keyword id="KW-0001">2Fe-2S</keyword>
<keyword id="KW-0997">Cell inner membrane</keyword>
<keyword id="KW-1003">Cell membrane</keyword>
<keyword id="KW-0274">FAD</keyword>
<keyword id="KW-0285">Flavoprotein</keyword>
<keyword id="KW-0406">Ion transport</keyword>
<keyword id="KW-0408">Iron</keyword>
<keyword id="KW-0411">Iron-sulfur</keyword>
<keyword id="KW-0472">Membrane</keyword>
<keyword id="KW-0479">Metal-binding</keyword>
<keyword id="KW-0520">NAD</keyword>
<keyword id="KW-0915">Sodium</keyword>
<keyword id="KW-0739">Sodium transport</keyword>
<keyword id="KW-1278">Translocase</keyword>
<keyword id="KW-0812">Transmembrane</keyword>
<keyword id="KW-1133">Transmembrane helix</keyword>
<keyword id="KW-0813">Transport</keyword>
<keyword id="KW-0830">Ubiquinone</keyword>
<comment type="function">
    <text evidence="1">NQR complex catalyzes the reduction of ubiquinone-1 to ubiquinol by two successive reactions, coupled with the transport of Na(+) ions from the cytoplasm to the periplasm. The first step is catalyzed by NqrF, which accepts electrons from NADH and reduces ubiquinone-1 to ubisemiquinone by a one-electron transfer pathway.</text>
</comment>
<comment type="catalytic activity">
    <reaction evidence="1">
        <text>a ubiquinone + n Na(+)(in) + NADH + H(+) = a ubiquinol + n Na(+)(out) + NAD(+)</text>
        <dbReference type="Rhea" id="RHEA:47748"/>
        <dbReference type="Rhea" id="RHEA-COMP:9565"/>
        <dbReference type="Rhea" id="RHEA-COMP:9566"/>
        <dbReference type="ChEBI" id="CHEBI:15378"/>
        <dbReference type="ChEBI" id="CHEBI:16389"/>
        <dbReference type="ChEBI" id="CHEBI:17976"/>
        <dbReference type="ChEBI" id="CHEBI:29101"/>
        <dbReference type="ChEBI" id="CHEBI:57540"/>
        <dbReference type="ChEBI" id="CHEBI:57945"/>
        <dbReference type="EC" id="7.2.1.1"/>
    </reaction>
</comment>
<comment type="cofactor">
    <cofactor evidence="1">
        <name>[2Fe-2S] cluster</name>
        <dbReference type="ChEBI" id="CHEBI:190135"/>
    </cofactor>
    <text evidence="1">Binds 1 [2Fe-2S] cluster.</text>
</comment>
<comment type="cofactor">
    <cofactor evidence="1">
        <name>FAD</name>
        <dbReference type="ChEBI" id="CHEBI:57692"/>
    </cofactor>
</comment>
<comment type="subunit">
    <text evidence="1">Composed of six subunits; NqrA, NqrB, NqrC, NqrD, NqrE and NqrF.</text>
</comment>
<comment type="subcellular location">
    <subcellularLocation>
        <location evidence="1">Cell inner membrane</location>
        <topology evidence="1">Single-pass membrane protein</topology>
    </subcellularLocation>
</comment>
<comment type="similarity">
    <text evidence="1">Belongs to the NqrF family.</text>
</comment>
<gene>
    <name evidence="1" type="primary">nqrF</name>
    <name type="ordered locus">CGSHiEE_02380</name>
</gene>
<dbReference type="EC" id="7.2.1.1" evidence="1"/>
<dbReference type="EMBL" id="CP000671">
    <property type="protein sequence ID" value="ABQ97927.1"/>
    <property type="molecule type" value="Genomic_DNA"/>
</dbReference>
<dbReference type="SMR" id="A5UAX6"/>
<dbReference type="KEGG" id="hip:CGSHiEE_02380"/>
<dbReference type="HOGENOM" id="CLU_003827_7_2_6"/>
<dbReference type="GO" id="GO:0005886">
    <property type="term" value="C:plasma membrane"/>
    <property type="evidence" value="ECO:0007669"/>
    <property type="project" value="UniProtKB-SubCell"/>
</dbReference>
<dbReference type="GO" id="GO:0051537">
    <property type="term" value="F:2 iron, 2 sulfur cluster binding"/>
    <property type="evidence" value="ECO:0007669"/>
    <property type="project" value="UniProtKB-KW"/>
</dbReference>
<dbReference type="GO" id="GO:0009055">
    <property type="term" value="F:electron transfer activity"/>
    <property type="evidence" value="ECO:0007669"/>
    <property type="project" value="UniProtKB-UniRule"/>
</dbReference>
<dbReference type="GO" id="GO:0046872">
    <property type="term" value="F:metal ion binding"/>
    <property type="evidence" value="ECO:0007669"/>
    <property type="project" value="UniProtKB-KW"/>
</dbReference>
<dbReference type="GO" id="GO:0016655">
    <property type="term" value="F:oxidoreductase activity, acting on NAD(P)H, quinone or similar compound as acceptor"/>
    <property type="evidence" value="ECO:0007669"/>
    <property type="project" value="InterPro"/>
</dbReference>
<dbReference type="GO" id="GO:0006814">
    <property type="term" value="P:sodium ion transport"/>
    <property type="evidence" value="ECO:0007669"/>
    <property type="project" value="UniProtKB-UniRule"/>
</dbReference>
<dbReference type="CDD" id="cd06188">
    <property type="entry name" value="NADH_quinone_reductase"/>
    <property type="match status" value="1"/>
</dbReference>
<dbReference type="FunFam" id="2.40.30.10:FF:000064">
    <property type="entry name" value="Na(+)-translocating NADH-quinone reductase subunit F"/>
    <property type="match status" value="1"/>
</dbReference>
<dbReference type="FunFam" id="3.40.50.80:FF:000014">
    <property type="entry name" value="Na(+)-translocating NADH-quinone reductase subunit F"/>
    <property type="match status" value="1"/>
</dbReference>
<dbReference type="Gene3D" id="3.10.20.30">
    <property type="match status" value="1"/>
</dbReference>
<dbReference type="Gene3D" id="3.40.50.80">
    <property type="entry name" value="Nucleotide-binding domain of ferredoxin-NADP reductase (FNR) module"/>
    <property type="match status" value="1"/>
</dbReference>
<dbReference type="Gene3D" id="2.40.30.10">
    <property type="entry name" value="Translation factors"/>
    <property type="match status" value="1"/>
</dbReference>
<dbReference type="HAMAP" id="MF_00430">
    <property type="entry name" value="NqrF"/>
    <property type="match status" value="1"/>
</dbReference>
<dbReference type="InterPro" id="IPR036010">
    <property type="entry name" value="2Fe-2S_ferredoxin-like_sf"/>
</dbReference>
<dbReference type="InterPro" id="IPR001041">
    <property type="entry name" value="2Fe-2S_ferredoxin-type"/>
</dbReference>
<dbReference type="InterPro" id="IPR012675">
    <property type="entry name" value="Beta-grasp_dom_sf"/>
</dbReference>
<dbReference type="InterPro" id="IPR008333">
    <property type="entry name" value="Cbr1-like_FAD-bd_dom"/>
</dbReference>
<dbReference type="InterPro" id="IPR017927">
    <property type="entry name" value="FAD-bd_FR_type"/>
</dbReference>
<dbReference type="InterPro" id="IPR001709">
    <property type="entry name" value="Flavoprot_Pyr_Nucl_cyt_Rdtase"/>
</dbReference>
<dbReference type="InterPro" id="IPR039261">
    <property type="entry name" value="FNR_nucleotide-bd"/>
</dbReference>
<dbReference type="InterPro" id="IPR010205">
    <property type="entry name" value="NqrF"/>
</dbReference>
<dbReference type="InterPro" id="IPR001433">
    <property type="entry name" value="OxRdtase_FAD/NAD-bd"/>
</dbReference>
<dbReference type="InterPro" id="IPR017938">
    <property type="entry name" value="Riboflavin_synthase-like_b-brl"/>
</dbReference>
<dbReference type="NCBIfam" id="TIGR01941">
    <property type="entry name" value="nqrF"/>
    <property type="match status" value="1"/>
</dbReference>
<dbReference type="PANTHER" id="PTHR43644">
    <property type="entry name" value="NA(+)-TRANSLOCATING NADH-QUINONE REDUCTASE SUBUNIT"/>
    <property type="match status" value="1"/>
</dbReference>
<dbReference type="PANTHER" id="PTHR43644:SF1">
    <property type="entry name" value="NAD(P)H-FLAVIN REDUCTASE"/>
    <property type="match status" value="1"/>
</dbReference>
<dbReference type="Pfam" id="PF00970">
    <property type="entry name" value="FAD_binding_6"/>
    <property type="match status" value="1"/>
</dbReference>
<dbReference type="Pfam" id="PF00111">
    <property type="entry name" value="Fer2"/>
    <property type="match status" value="1"/>
</dbReference>
<dbReference type="Pfam" id="PF00175">
    <property type="entry name" value="NAD_binding_1"/>
    <property type="match status" value="1"/>
</dbReference>
<dbReference type="PIRSF" id="PIRSF000044">
    <property type="entry name" value="Cis_Diol_DH_RD"/>
    <property type="match status" value="1"/>
</dbReference>
<dbReference type="PRINTS" id="PR00371">
    <property type="entry name" value="FPNCR"/>
</dbReference>
<dbReference type="SUPFAM" id="SSF54292">
    <property type="entry name" value="2Fe-2S ferredoxin-like"/>
    <property type="match status" value="1"/>
</dbReference>
<dbReference type="SUPFAM" id="SSF52343">
    <property type="entry name" value="Ferredoxin reductase-like, C-terminal NADP-linked domain"/>
    <property type="match status" value="1"/>
</dbReference>
<dbReference type="SUPFAM" id="SSF63380">
    <property type="entry name" value="Riboflavin synthase domain-like"/>
    <property type="match status" value="1"/>
</dbReference>
<dbReference type="PROSITE" id="PS51085">
    <property type="entry name" value="2FE2S_FER_2"/>
    <property type="match status" value="1"/>
</dbReference>
<dbReference type="PROSITE" id="PS51384">
    <property type="entry name" value="FAD_FR"/>
    <property type="match status" value="1"/>
</dbReference>
<reference key="1">
    <citation type="journal article" date="2007" name="Genome Biol.">
        <title>Characterization and modeling of the Haemophilus influenzae core and supragenomes based on the complete genomic sequences of Rd and 12 clinical nontypeable strains.</title>
        <authorList>
            <person name="Hogg J.S."/>
            <person name="Hu F.Z."/>
            <person name="Janto B."/>
            <person name="Boissy R."/>
            <person name="Hayes J."/>
            <person name="Keefe R."/>
            <person name="Post J.C."/>
            <person name="Ehrlich G.D."/>
        </authorList>
    </citation>
    <scope>NUCLEOTIDE SEQUENCE [LARGE SCALE GENOMIC DNA]</scope>
    <source>
        <strain>PittEE</strain>
    </source>
</reference>
<sequence>MSDSVILALGIAAFTVIVLVLVAIILFAKSKLVDSGDITIGINDDPEKAITLPAGSKLLGALASKGIFVSSACGGGGSCGQCIVKVKNGGGEILPTELSHINKREAKEGYRLACQVNVKGNMEVELPEEIFGVKKWECTVISNDNKATFIKELKLAIPEGEEVPFRAGGYIQIEAEPHVVNYKDFDIPEEYHEDWDKYDLWRYVSKVDEHIIRAYSMASYPEEKGIIMLNVRIATPPPRQPDAPPGQMSSYIWSLKAGDKVTISGPFGEFFAKETDAEMVFIGGGAGMAPMRSHIFDQLKRLHSKRKMSFWYGARSKREIFYQEDFDQLQAENPNFVWHVALSDALPEDNWTGYTGFIHNVLYENYLKNHEAPEDCEYYMCGPPVMNAAVIKMLKDLGVEDENILLDDFGG</sequence>
<protein>
    <recommendedName>
        <fullName evidence="1">Na(+)-translocating NADH-quinone reductase subunit F</fullName>
        <shortName evidence="1">Na(+)-NQR subunit F</shortName>
        <shortName evidence="1">Na(+)-translocating NQR subunit F</shortName>
        <ecNumber evidence="1">7.2.1.1</ecNumber>
    </recommendedName>
    <alternativeName>
        <fullName evidence="1">NQR complex subunit F</fullName>
    </alternativeName>
    <alternativeName>
        <fullName evidence="1">NQR-1 subunit F</fullName>
    </alternativeName>
</protein>
<proteinExistence type="inferred from homology"/>